<gene>
    <name evidence="1" type="primary">spoIIAB</name>
    <name type="ordered locus">Teth514_1558</name>
</gene>
<organism>
    <name type="scientific">Thermoanaerobacter sp. (strain X514)</name>
    <dbReference type="NCBI Taxonomy" id="399726"/>
    <lineage>
        <taxon>Bacteria</taxon>
        <taxon>Bacillati</taxon>
        <taxon>Bacillota</taxon>
        <taxon>Clostridia</taxon>
        <taxon>Thermoanaerobacterales</taxon>
        <taxon>Thermoanaerobacteraceae</taxon>
        <taxon>Thermoanaerobacter</taxon>
    </lineage>
</organism>
<dbReference type="EC" id="2.7.11.1" evidence="1"/>
<dbReference type="EMBL" id="CP000923">
    <property type="protein sequence ID" value="ABY92845.1"/>
    <property type="molecule type" value="Genomic_DNA"/>
</dbReference>
<dbReference type="RefSeq" id="WP_003868002.1">
    <property type="nucleotide sequence ID" value="NC_010320.1"/>
</dbReference>
<dbReference type="SMR" id="B0K150"/>
<dbReference type="KEGG" id="tex:Teth514_1558"/>
<dbReference type="HOGENOM" id="CLU_090336_11_0_9"/>
<dbReference type="Proteomes" id="UP000002155">
    <property type="component" value="Chromosome"/>
</dbReference>
<dbReference type="GO" id="GO:0005524">
    <property type="term" value="F:ATP binding"/>
    <property type="evidence" value="ECO:0007669"/>
    <property type="project" value="UniProtKB-KW"/>
</dbReference>
<dbReference type="GO" id="GO:0106310">
    <property type="term" value="F:protein serine kinase activity"/>
    <property type="evidence" value="ECO:0007669"/>
    <property type="project" value="RHEA"/>
</dbReference>
<dbReference type="GO" id="GO:0004674">
    <property type="term" value="F:protein serine/threonine kinase activity"/>
    <property type="evidence" value="ECO:0007669"/>
    <property type="project" value="UniProtKB-KW"/>
</dbReference>
<dbReference type="GO" id="GO:0016989">
    <property type="term" value="F:sigma factor antagonist activity"/>
    <property type="evidence" value="ECO:0007669"/>
    <property type="project" value="InterPro"/>
</dbReference>
<dbReference type="GO" id="GO:0030436">
    <property type="term" value="P:asexual sporulation"/>
    <property type="evidence" value="ECO:0007669"/>
    <property type="project" value="UniProtKB-UniRule"/>
</dbReference>
<dbReference type="GO" id="GO:0042174">
    <property type="term" value="P:negative regulation of sporulation resulting in formation of a cellular spore"/>
    <property type="evidence" value="ECO:0007669"/>
    <property type="project" value="InterPro"/>
</dbReference>
<dbReference type="GO" id="GO:0030435">
    <property type="term" value="P:sporulation resulting in formation of a cellular spore"/>
    <property type="evidence" value="ECO:0007669"/>
    <property type="project" value="UniProtKB-KW"/>
</dbReference>
<dbReference type="Gene3D" id="3.30.565.10">
    <property type="entry name" value="Histidine kinase-like ATPase, C-terminal domain"/>
    <property type="match status" value="1"/>
</dbReference>
<dbReference type="HAMAP" id="MF_00637">
    <property type="entry name" value="Anti_sigma_F"/>
    <property type="match status" value="1"/>
</dbReference>
<dbReference type="InterPro" id="IPR050267">
    <property type="entry name" value="Anti-sigma-factor_SerPK"/>
</dbReference>
<dbReference type="InterPro" id="IPR010194">
    <property type="entry name" value="Anti-sigma_F"/>
</dbReference>
<dbReference type="InterPro" id="IPR036890">
    <property type="entry name" value="HATPase_C_sf"/>
</dbReference>
<dbReference type="NCBIfam" id="TIGR01925">
    <property type="entry name" value="spIIAB"/>
    <property type="match status" value="1"/>
</dbReference>
<dbReference type="PANTHER" id="PTHR35526:SF3">
    <property type="entry name" value="ANTI-SIGMA-F FACTOR RSBW"/>
    <property type="match status" value="1"/>
</dbReference>
<dbReference type="PANTHER" id="PTHR35526">
    <property type="entry name" value="ANTI-SIGMA-F FACTOR RSBW-RELATED"/>
    <property type="match status" value="1"/>
</dbReference>
<dbReference type="Pfam" id="PF13581">
    <property type="entry name" value="HATPase_c_2"/>
    <property type="match status" value="1"/>
</dbReference>
<dbReference type="SMART" id="SM00387">
    <property type="entry name" value="HATPase_c"/>
    <property type="match status" value="1"/>
</dbReference>
<dbReference type="SUPFAM" id="SSF55874">
    <property type="entry name" value="ATPase domain of HSP90 chaperone/DNA topoisomerase II/histidine kinase"/>
    <property type="match status" value="1"/>
</dbReference>
<sequence>MEYTNMMELNFLSKSQNESFARTVVAAFAAQLDPTIEEIADIKTAVSEAVTNCIIHGYENKIGIITIKAFISGNKITIEVIDEGKGIEDIEKAMQPLFTTRLEEERAGMGFTVMQTFMDELEVESTPGKGTLVRMTKYIGSDK</sequence>
<feature type="chain" id="PRO_1000130813" description="Anti-sigma F factor">
    <location>
        <begin position="1"/>
        <end position="143"/>
    </location>
</feature>
<evidence type="ECO:0000255" key="1">
    <source>
        <dbReference type="HAMAP-Rule" id="MF_00637"/>
    </source>
</evidence>
<reference key="1">
    <citation type="submission" date="2008-01" db="EMBL/GenBank/DDBJ databases">
        <title>Complete sequence of Thermoanaerobacter sp. X514.</title>
        <authorList>
            <consortium name="US DOE Joint Genome Institute"/>
            <person name="Copeland A."/>
            <person name="Lucas S."/>
            <person name="Lapidus A."/>
            <person name="Barry K."/>
            <person name="Glavina del Rio T."/>
            <person name="Dalin E."/>
            <person name="Tice H."/>
            <person name="Pitluck S."/>
            <person name="Bruce D."/>
            <person name="Goodwin L."/>
            <person name="Saunders E."/>
            <person name="Brettin T."/>
            <person name="Detter J.C."/>
            <person name="Han C."/>
            <person name="Schmutz J."/>
            <person name="Larimer F."/>
            <person name="Land M."/>
            <person name="Hauser L."/>
            <person name="Kyrpides N."/>
            <person name="Kim E."/>
            <person name="Hemme C."/>
            <person name="Fields M.W."/>
            <person name="He Z."/>
            <person name="Zhou J."/>
            <person name="Richardson P."/>
        </authorList>
    </citation>
    <scope>NUCLEOTIDE SEQUENCE [LARGE SCALE GENOMIC DNA]</scope>
    <source>
        <strain>X514</strain>
    </source>
</reference>
<name>SP2AB_THEPX</name>
<protein>
    <recommendedName>
        <fullName evidence="1">Anti-sigma F factor</fullName>
        <ecNumber evidence="1">2.7.11.1</ecNumber>
    </recommendedName>
    <alternativeName>
        <fullName evidence="1">Stage II sporulation protein AB</fullName>
    </alternativeName>
</protein>
<keyword id="KW-0067">ATP-binding</keyword>
<keyword id="KW-0418">Kinase</keyword>
<keyword id="KW-0547">Nucleotide-binding</keyword>
<keyword id="KW-0723">Serine/threonine-protein kinase</keyword>
<keyword id="KW-0749">Sporulation</keyword>
<keyword id="KW-0808">Transferase</keyword>
<comment type="function">
    <text evidence="1">Binds to sigma F and blocks its ability to form an RNA polymerase holoenzyme (E-sigma F). Phosphorylates SpoIIAA on a serine residue. This phosphorylation may enable SpoIIAA to act as an anti-anti-sigma factor that counteracts SpoIIAB and thus releases sigma F from inhibition.</text>
</comment>
<comment type="catalytic activity">
    <reaction evidence="1">
        <text>L-seryl-[protein] + ATP = O-phospho-L-seryl-[protein] + ADP + H(+)</text>
        <dbReference type="Rhea" id="RHEA:17989"/>
        <dbReference type="Rhea" id="RHEA-COMP:9863"/>
        <dbReference type="Rhea" id="RHEA-COMP:11604"/>
        <dbReference type="ChEBI" id="CHEBI:15378"/>
        <dbReference type="ChEBI" id="CHEBI:29999"/>
        <dbReference type="ChEBI" id="CHEBI:30616"/>
        <dbReference type="ChEBI" id="CHEBI:83421"/>
        <dbReference type="ChEBI" id="CHEBI:456216"/>
        <dbReference type="EC" id="2.7.11.1"/>
    </reaction>
</comment>
<comment type="catalytic activity">
    <reaction evidence="1">
        <text>L-threonyl-[protein] + ATP = O-phospho-L-threonyl-[protein] + ADP + H(+)</text>
        <dbReference type="Rhea" id="RHEA:46608"/>
        <dbReference type="Rhea" id="RHEA-COMP:11060"/>
        <dbReference type="Rhea" id="RHEA-COMP:11605"/>
        <dbReference type="ChEBI" id="CHEBI:15378"/>
        <dbReference type="ChEBI" id="CHEBI:30013"/>
        <dbReference type="ChEBI" id="CHEBI:30616"/>
        <dbReference type="ChEBI" id="CHEBI:61977"/>
        <dbReference type="ChEBI" id="CHEBI:456216"/>
        <dbReference type="EC" id="2.7.11.1"/>
    </reaction>
</comment>
<comment type="similarity">
    <text evidence="1">Belongs to the anti-sigma-factor family.</text>
</comment>
<proteinExistence type="inferred from homology"/>
<accession>B0K150</accession>